<proteinExistence type="inferred from homology"/>
<dbReference type="EMBL" id="AP005672">
    <property type="protein sequence ID" value="BAC85095.1"/>
    <property type="molecule type" value="Genomic_DNA"/>
</dbReference>
<dbReference type="RefSeq" id="NP_904245.1">
    <property type="nucleotide sequence ID" value="NC_005087.2"/>
</dbReference>
<dbReference type="RefSeq" id="YP_009477575.1">
    <property type="nucleotide sequence ID" value="NC_037465.1"/>
</dbReference>
<dbReference type="SMR" id="Q6YXP6"/>
<dbReference type="FunCoup" id="Q6YXP6">
    <property type="interactions" value="290"/>
</dbReference>
<dbReference type="STRING" id="3218.Q6YXP6"/>
<dbReference type="GeneID" id="2546711"/>
<dbReference type="GeneID" id="36487220"/>
<dbReference type="KEGG" id="ppp:2546711"/>
<dbReference type="InParanoid" id="Q6YXP6"/>
<dbReference type="OrthoDB" id="441444at2759"/>
<dbReference type="Proteomes" id="UP000006727">
    <property type="component" value="Chloroplast"/>
</dbReference>
<dbReference type="GO" id="GO:0009507">
    <property type="term" value="C:chloroplast"/>
    <property type="evidence" value="ECO:0007669"/>
    <property type="project" value="UniProtKB-SubCell"/>
</dbReference>
<dbReference type="GO" id="GO:1990904">
    <property type="term" value="C:ribonucleoprotein complex"/>
    <property type="evidence" value="ECO:0007669"/>
    <property type="project" value="UniProtKB-KW"/>
</dbReference>
<dbReference type="GO" id="GO:0005840">
    <property type="term" value="C:ribosome"/>
    <property type="evidence" value="ECO:0007669"/>
    <property type="project" value="UniProtKB-KW"/>
</dbReference>
<dbReference type="GO" id="GO:0003735">
    <property type="term" value="F:structural constituent of ribosome"/>
    <property type="evidence" value="ECO:0007669"/>
    <property type="project" value="InterPro"/>
</dbReference>
<dbReference type="GO" id="GO:0006412">
    <property type="term" value="P:translation"/>
    <property type="evidence" value="ECO:0007669"/>
    <property type="project" value="UniProtKB-UniRule"/>
</dbReference>
<dbReference type="CDD" id="cd00677">
    <property type="entry name" value="S15_NS1_EPRS_RNA-bind"/>
    <property type="match status" value="1"/>
</dbReference>
<dbReference type="Gene3D" id="1.10.287.10">
    <property type="entry name" value="S15/NS1, RNA-binding"/>
    <property type="match status" value="1"/>
</dbReference>
<dbReference type="HAMAP" id="MF_01343_B">
    <property type="entry name" value="Ribosomal_uS15_B"/>
    <property type="match status" value="1"/>
</dbReference>
<dbReference type="InterPro" id="IPR000589">
    <property type="entry name" value="Ribosomal_uS15"/>
</dbReference>
<dbReference type="InterPro" id="IPR005290">
    <property type="entry name" value="Ribosomal_uS15_bac-type"/>
</dbReference>
<dbReference type="InterPro" id="IPR009068">
    <property type="entry name" value="uS15_NS1_RNA-bd_sf"/>
</dbReference>
<dbReference type="NCBIfam" id="TIGR00952">
    <property type="entry name" value="S15_bact"/>
    <property type="match status" value="1"/>
</dbReference>
<dbReference type="PANTHER" id="PTHR23321">
    <property type="entry name" value="RIBOSOMAL PROTEIN S15, BACTERIAL AND ORGANELLAR"/>
    <property type="match status" value="1"/>
</dbReference>
<dbReference type="PANTHER" id="PTHR23321:SF26">
    <property type="entry name" value="SMALL RIBOSOMAL SUBUNIT PROTEIN US15M"/>
    <property type="match status" value="1"/>
</dbReference>
<dbReference type="Pfam" id="PF00312">
    <property type="entry name" value="Ribosomal_S15"/>
    <property type="match status" value="1"/>
</dbReference>
<dbReference type="SMART" id="SM01387">
    <property type="entry name" value="Ribosomal_S15"/>
    <property type="match status" value="1"/>
</dbReference>
<dbReference type="SUPFAM" id="SSF47060">
    <property type="entry name" value="S15/NS1 RNA-binding domain"/>
    <property type="match status" value="1"/>
</dbReference>
<dbReference type="PROSITE" id="PS00362">
    <property type="entry name" value="RIBOSOMAL_S15"/>
    <property type="match status" value="1"/>
</dbReference>
<name>RR15_PHYPA</name>
<feature type="chain" id="PRO_0000115646" description="Small ribosomal subunit protein uS15c">
    <location>
        <begin position="1"/>
        <end position="88"/>
    </location>
</feature>
<organism>
    <name type="scientific">Physcomitrium patens</name>
    <name type="common">Spreading-leaved earth moss</name>
    <name type="synonym">Physcomitrella patens</name>
    <dbReference type="NCBI Taxonomy" id="3218"/>
    <lineage>
        <taxon>Eukaryota</taxon>
        <taxon>Viridiplantae</taxon>
        <taxon>Streptophyta</taxon>
        <taxon>Embryophyta</taxon>
        <taxon>Bryophyta</taxon>
        <taxon>Bryophytina</taxon>
        <taxon>Bryopsida</taxon>
        <taxon>Funariidae</taxon>
        <taxon>Funariales</taxon>
        <taxon>Funariaceae</taxon>
        <taxon>Physcomitrium</taxon>
    </lineage>
</organism>
<reference key="1">
    <citation type="journal article" date="2003" name="Nucleic Acids Res.">
        <title>Complete chloroplast DNA sequence of the moss Physcomitrella patens: evidence for the loss and relocation of rpoA from the chloroplast to the nucleus.</title>
        <authorList>
            <person name="Sugiura C."/>
            <person name="Kobayashi Y."/>
            <person name="Setsuyuki A."/>
            <person name="Sugita C."/>
            <person name="Sugita M."/>
        </authorList>
    </citation>
    <scope>NUCLEOTIDE SEQUENCE [LARGE SCALE GENOMIC DNA]</scope>
    <source>
        <strain>cv. Gransden 2004</strain>
    </source>
</reference>
<gene>
    <name type="primary">rps15</name>
</gene>
<evidence type="ECO:0000250" key="1"/>
<evidence type="ECO:0000305" key="2"/>
<protein>
    <recommendedName>
        <fullName evidence="2">Small ribosomal subunit protein uS15c</fullName>
    </recommendedName>
    <alternativeName>
        <fullName>30S ribosomal protein S15, chloroplastic</fullName>
    </alternativeName>
</protein>
<comment type="subunit">
    <text evidence="1">Part of the 30S ribosomal subunit.</text>
</comment>
<comment type="subcellular location">
    <subcellularLocation>
        <location>Plastid</location>
        <location>Chloroplast</location>
    </subcellularLocation>
</comment>
<comment type="similarity">
    <text evidence="2">Belongs to the universal ribosomal protein uS15 family.</text>
</comment>
<geneLocation type="chloroplast"/>
<sequence length="88" mass="10263">MSKKLFIGSSLLSKEQTGSVEFQISHLTNRVLKLTDHLKFHDKDYSSQRGLLKILGKRKRLLSYLSKTNLTSYETLINKLNIRKLKNR</sequence>
<keyword id="KW-0150">Chloroplast</keyword>
<keyword id="KW-0934">Plastid</keyword>
<keyword id="KW-1185">Reference proteome</keyword>
<keyword id="KW-0687">Ribonucleoprotein</keyword>
<keyword id="KW-0689">Ribosomal protein</keyword>
<accession>Q6YXP6</accession>